<organism>
    <name type="scientific">Bartonella bacilliformis (strain ATCC 35685 / KC583 / Herrer 020/F12,63)</name>
    <dbReference type="NCBI Taxonomy" id="360095"/>
    <lineage>
        <taxon>Bacteria</taxon>
        <taxon>Pseudomonadati</taxon>
        <taxon>Pseudomonadota</taxon>
        <taxon>Alphaproteobacteria</taxon>
        <taxon>Hyphomicrobiales</taxon>
        <taxon>Bartonellaceae</taxon>
        <taxon>Bartonella</taxon>
    </lineage>
</organism>
<reference key="1">
    <citation type="submission" date="2006-12" db="EMBL/GenBank/DDBJ databases">
        <authorList>
            <person name="Hendrix L."/>
            <person name="Mohamoud Y."/>
            <person name="Radune D."/>
            <person name="Shvartsbeyn A."/>
            <person name="Daugherty S."/>
            <person name="Dodson R."/>
            <person name="Durkin A.S."/>
            <person name="Harkins D."/>
            <person name="Huot H."/>
            <person name="Kothari S.P."/>
            <person name="Madupu R."/>
            <person name="Li J."/>
            <person name="Nelson W.C."/>
            <person name="Shrivastava S."/>
            <person name="Giglio M.G."/>
            <person name="Haft D."/>
            <person name="Selengut J."/>
            <person name="Fraser-Ligget C."/>
            <person name="Seshadri R."/>
        </authorList>
    </citation>
    <scope>NUCLEOTIDE SEQUENCE [LARGE SCALE GENOMIC DNA]</scope>
    <source>
        <strain>ATCC 35685 / KC583 / Herrer 020/F12,63</strain>
    </source>
</reference>
<proteinExistence type="inferred from homology"/>
<accession>A1UTL4</accession>
<dbReference type="EMBL" id="CP000524">
    <property type="protein sequence ID" value="ABM44952.1"/>
    <property type="molecule type" value="Genomic_DNA"/>
</dbReference>
<dbReference type="RefSeq" id="WP_005767598.1">
    <property type="nucleotide sequence ID" value="NC_008783.1"/>
</dbReference>
<dbReference type="SMR" id="A1UTL4"/>
<dbReference type="STRING" id="360095.BARBAKC583_1042"/>
<dbReference type="GeneID" id="4684125"/>
<dbReference type="KEGG" id="bbk:BARBAKC583_1042"/>
<dbReference type="PATRIC" id="fig|360095.6.peg.1011"/>
<dbReference type="eggNOG" id="COG0792">
    <property type="taxonomic scope" value="Bacteria"/>
</dbReference>
<dbReference type="HOGENOM" id="CLU_115353_0_2_5"/>
<dbReference type="OrthoDB" id="9812968at2"/>
<dbReference type="Proteomes" id="UP000000643">
    <property type="component" value="Chromosome"/>
</dbReference>
<dbReference type="GO" id="GO:0003676">
    <property type="term" value="F:nucleic acid binding"/>
    <property type="evidence" value="ECO:0007669"/>
    <property type="project" value="InterPro"/>
</dbReference>
<dbReference type="Gene3D" id="3.40.1350.10">
    <property type="match status" value="1"/>
</dbReference>
<dbReference type="HAMAP" id="MF_00048">
    <property type="entry name" value="UPF0102"/>
    <property type="match status" value="1"/>
</dbReference>
<dbReference type="InterPro" id="IPR011335">
    <property type="entry name" value="Restrct_endonuc-II-like"/>
</dbReference>
<dbReference type="InterPro" id="IPR011856">
    <property type="entry name" value="tRNA_endonuc-like_dom_sf"/>
</dbReference>
<dbReference type="InterPro" id="IPR003509">
    <property type="entry name" value="UPF0102_YraN-like"/>
</dbReference>
<dbReference type="NCBIfam" id="NF009151">
    <property type="entry name" value="PRK12497.1-5"/>
    <property type="match status" value="1"/>
</dbReference>
<dbReference type="PANTHER" id="PTHR34039">
    <property type="entry name" value="UPF0102 PROTEIN YRAN"/>
    <property type="match status" value="1"/>
</dbReference>
<dbReference type="PANTHER" id="PTHR34039:SF1">
    <property type="entry name" value="UPF0102 PROTEIN YRAN"/>
    <property type="match status" value="1"/>
</dbReference>
<dbReference type="Pfam" id="PF02021">
    <property type="entry name" value="UPF0102"/>
    <property type="match status" value="1"/>
</dbReference>
<dbReference type="SUPFAM" id="SSF52980">
    <property type="entry name" value="Restriction endonuclease-like"/>
    <property type="match status" value="1"/>
</dbReference>
<comment type="similarity">
    <text evidence="1">Belongs to the UPF0102 family.</text>
</comment>
<name>Y1042_BARBK</name>
<gene>
    <name type="ordered locus">BARBAKC583_1042</name>
</gene>
<feature type="chain" id="PRO_0000336126" description="UPF0102 protein BARBAKC583_1042">
    <location>
        <begin position="1"/>
        <end position="122"/>
    </location>
</feature>
<sequence>MQKKDRRKSFYRGIRSEKWAAWWLRLKGFRIVARRFKTKSGEIDLIARRGNLVLIVEVKARATLADAMVAVCRMNERRIEAAADIWLAQQKDYSALCVRFDFIAILPWRLPHHIQRFFESHQ</sequence>
<evidence type="ECO:0000255" key="1">
    <source>
        <dbReference type="HAMAP-Rule" id="MF_00048"/>
    </source>
</evidence>
<protein>
    <recommendedName>
        <fullName evidence="1">UPF0102 protein BARBAKC583_1042</fullName>
    </recommendedName>
</protein>